<organism>
    <name type="scientific">Chara vulgaris</name>
    <name type="common">Common stonewort</name>
    <dbReference type="NCBI Taxonomy" id="55564"/>
    <lineage>
        <taxon>Eukaryota</taxon>
        <taxon>Viridiplantae</taxon>
        <taxon>Streptophyta</taxon>
        <taxon>Charophyceae</taxon>
        <taxon>Charales</taxon>
        <taxon>Characeae</taxon>
        <taxon>Chara</taxon>
    </lineage>
</organism>
<dbReference type="EMBL" id="DQ229107">
    <property type="protein sequence ID" value="ABA61953.1"/>
    <property type="molecule type" value="Genomic_DNA"/>
</dbReference>
<dbReference type="RefSeq" id="YP_635752.1">
    <property type="nucleotide sequence ID" value="NC_008097.1"/>
</dbReference>
<dbReference type="SMR" id="Q1ACJ5"/>
<dbReference type="GeneID" id="4100319"/>
<dbReference type="GO" id="GO:0009535">
    <property type="term" value="C:chloroplast thylakoid membrane"/>
    <property type="evidence" value="ECO:0007669"/>
    <property type="project" value="UniProtKB-SubCell"/>
</dbReference>
<dbReference type="GO" id="GO:0009539">
    <property type="term" value="C:photosystem II reaction center"/>
    <property type="evidence" value="ECO:0007669"/>
    <property type="project" value="InterPro"/>
</dbReference>
<dbReference type="GO" id="GO:0015979">
    <property type="term" value="P:photosynthesis"/>
    <property type="evidence" value="ECO:0007669"/>
    <property type="project" value="UniProtKB-UniRule"/>
</dbReference>
<dbReference type="GO" id="GO:0042549">
    <property type="term" value="P:photosystem II stabilization"/>
    <property type="evidence" value="ECO:0007669"/>
    <property type="project" value="InterPro"/>
</dbReference>
<dbReference type="Gene3D" id="1.10.287.740">
    <property type="entry name" value="Photosystem II PsbZ, reaction centre"/>
    <property type="match status" value="1"/>
</dbReference>
<dbReference type="HAMAP" id="MF_00644">
    <property type="entry name" value="PSII_PsbZ"/>
    <property type="match status" value="1"/>
</dbReference>
<dbReference type="InterPro" id="IPR002644">
    <property type="entry name" value="PSII_PsbZ"/>
</dbReference>
<dbReference type="InterPro" id="IPR036512">
    <property type="entry name" value="PSII_PsbZ_sf"/>
</dbReference>
<dbReference type="NCBIfam" id="TIGR03043">
    <property type="entry name" value="PS_II_psbZ"/>
    <property type="match status" value="1"/>
</dbReference>
<dbReference type="PANTHER" id="PTHR34971">
    <property type="entry name" value="PHOTOSYSTEM II REACTION CENTER PROTEIN Z"/>
    <property type="match status" value="1"/>
</dbReference>
<dbReference type="PANTHER" id="PTHR34971:SF2">
    <property type="entry name" value="PHOTOSYSTEM II REACTION CENTER PROTEIN Z"/>
    <property type="match status" value="1"/>
</dbReference>
<dbReference type="Pfam" id="PF01737">
    <property type="entry name" value="Ycf9"/>
    <property type="match status" value="1"/>
</dbReference>
<dbReference type="SUPFAM" id="SSF161055">
    <property type="entry name" value="PsbZ-like"/>
    <property type="match status" value="1"/>
</dbReference>
<name>PSBZ_CHAVU</name>
<geneLocation type="chloroplast"/>
<feature type="chain" id="PRO_0000277210" description="Photosystem II reaction center protein Z">
    <location>
        <begin position="1"/>
        <end position="62"/>
    </location>
</feature>
<feature type="transmembrane region" description="Helical" evidence="1">
    <location>
        <begin position="8"/>
        <end position="28"/>
    </location>
</feature>
<feature type="transmembrane region" description="Helical" evidence="1">
    <location>
        <begin position="41"/>
        <end position="61"/>
    </location>
</feature>
<sequence length="62" mass="6631">MIIAFQFALFALVAISFILVVGVPVILASPEGWSNTKNAVFSGASLWIFLVFVVGILNSFIA</sequence>
<keyword id="KW-0150">Chloroplast</keyword>
<keyword id="KW-0472">Membrane</keyword>
<keyword id="KW-0602">Photosynthesis</keyword>
<keyword id="KW-0604">Photosystem II</keyword>
<keyword id="KW-0934">Plastid</keyword>
<keyword id="KW-0674">Reaction center</keyword>
<keyword id="KW-0793">Thylakoid</keyword>
<keyword id="KW-0812">Transmembrane</keyword>
<keyword id="KW-1133">Transmembrane helix</keyword>
<evidence type="ECO:0000255" key="1">
    <source>
        <dbReference type="HAMAP-Rule" id="MF_00644"/>
    </source>
</evidence>
<protein>
    <recommendedName>
        <fullName evidence="1">Photosystem II reaction center protein Z</fullName>
        <shortName evidence="1">PSII-Z</shortName>
    </recommendedName>
</protein>
<proteinExistence type="inferred from homology"/>
<gene>
    <name evidence="1" type="primary">psbZ</name>
</gene>
<accession>Q1ACJ5</accession>
<comment type="function">
    <text evidence="1">May control the interaction of photosystem II (PSII) cores with the light-harvesting antenna, regulates electron flow through the 2 photosystem reaction centers. PSII is a light-driven water plastoquinone oxidoreductase, using light energy to abstract electrons from H(2)O, generating a proton gradient subsequently used for ATP formation.</text>
</comment>
<comment type="subunit">
    <text evidence="1">PSII is composed of 1 copy each of membrane proteins PsbA, PsbB, PsbC, PsbD, PsbE, PsbF, PsbH, PsbI, PsbJ, PsbK, PsbL, PsbM, PsbT, PsbY, PsbZ, Psb30/Ycf12, at least 3 peripheral proteins of the oxygen-evolving complex and a large number of cofactors. It forms dimeric complexes.</text>
</comment>
<comment type="subcellular location">
    <subcellularLocation>
        <location evidence="1">Plastid</location>
        <location evidence="1">Chloroplast thylakoid membrane</location>
        <topology evidence="1">Multi-pass membrane protein</topology>
    </subcellularLocation>
</comment>
<comment type="similarity">
    <text evidence="1">Belongs to the PsbZ family.</text>
</comment>
<reference key="1">
    <citation type="journal article" date="2006" name="Mol. Biol. Evol.">
        <title>The chloroplast genome sequence of Chara vulgaris sheds new light into the closest green algal relatives of land plants.</title>
        <authorList>
            <person name="Turmel M."/>
            <person name="Otis C."/>
            <person name="Lemieux C."/>
        </authorList>
    </citation>
    <scope>NUCLEOTIDE SEQUENCE [LARGE SCALE GENOMIC DNA]</scope>
</reference>